<proteinExistence type="inferred from homology"/>
<dbReference type="EC" id="1.1.1.37" evidence="1"/>
<dbReference type="EMBL" id="AE017355">
    <property type="protein sequence ID" value="AAT63546.1"/>
    <property type="molecule type" value="Genomic_DNA"/>
</dbReference>
<dbReference type="RefSeq" id="WP_000153232.1">
    <property type="nucleotide sequence ID" value="NC_005957.1"/>
</dbReference>
<dbReference type="RefSeq" id="YP_038636.1">
    <property type="nucleotide sequence ID" value="NC_005957.1"/>
</dbReference>
<dbReference type="SMR" id="Q6HCU0"/>
<dbReference type="GeneID" id="93006518"/>
<dbReference type="KEGG" id="btk:BT9727_4321"/>
<dbReference type="PATRIC" id="fig|281309.8.peg.4607"/>
<dbReference type="HOGENOM" id="CLU_045401_2_1_9"/>
<dbReference type="Proteomes" id="UP000001301">
    <property type="component" value="Chromosome"/>
</dbReference>
<dbReference type="GO" id="GO:0004459">
    <property type="term" value="F:L-lactate dehydrogenase activity"/>
    <property type="evidence" value="ECO:0007669"/>
    <property type="project" value="TreeGrafter"/>
</dbReference>
<dbReference type="GO" id="GO:0030060">
    <property type="term" value="F:L-malate dehydrogenase (NAD+) activity"/>
    <property type="evidence" value="ECO:0007669"/>
    <property type="project" value="UniProtKB-UniRule"/>
</dbReference>
<dbReference type="GO" id="GO:0006089">
    <property type="term" value="P:lactate metabolic process"/>
    <property type="evidence" value="ECO:0007669"/>
    <property type="project" value="TreeGrafter"/>
</dbReference>
<dbReference type="GO" id="GO:0006099">
    <property type="term" value="P:tricarboxylic acid cycle"/>
    <property type="evidence" value="ECO:0007669"/>
    <property type="project" value="UniProtKB-UniRule"/>
</dbReference>
<dbReference type="CDD" id="cd01339">
    <property type="entry name" value="LDH-like_MDH"/>
    <property type="match status" value="1"/>
</dbReference>
<dbReference type="FunFam" id="3.40.50.720:FF:000018">
    <property type="entry name" value="Malate dehydrogenase"/>
    <property type="match status" value="1"/>
</dbReference>
<dbReference type="FunFam" id="3.90.110.10:FF:000004">
    <property type="entry name" value="Malate dehydrogenase"/>
    <property type="match status" value="1"/>
</dbReference>
<dbReference type="Gene3D" id="3.90.110.10">
    <property type="entry name" value="Lactate dehydrogenase/glycoside hydrolase, family 4, C-terminal"/>
    <property type="match status" value="1"/>
</dbReference>
<dbReference type="Gene3D" id="3.40.50.720">
    <property type="entry name" value="NAD(P)-binding Rossmann-like Domain"/>
    <property type="match status" value="1"/>
</dbReference>
<dbReference type="HAMAP" id="MF_00487">
    <property type="entry name" value="Malate_dehydrog_3"/>
    <property type="match status" value="1"/>
</dbReference>
<dbReference type="InterPro" id="IPR001557">
    <property type="entry name" value="L-lactate/malate_DH"/>
</dbReference>
<dbReference type="InterPro" id="IPR022383">
    <property type="entry name" value="Lactate/malate_DH_C"/>
</dbReference>
<dbReference type="InterPro" id="IPR001236">
    <property type="entry name" value="Lactate/malate_DH_N"/>
</dbReference>
<dbReference type="InterPro" id="IPR015955">
    <property type="entry name" value="Lactate_DH/Glyco_Ohase_4_C"/>
</dbReference>
<dbReference type="InterPro" id="IPR011275">
    <property type="entry name" value="Malate_DH_type3"/>
</dbReference>
<dbReference type="InterPro" id="IPR036291">
    <property type="entry name" value="NAD(P)-bd_dom_sf"/>
</dbReference>
<dbReference type="NCBIfam" id="TIGR01763">
    <property type="entry name" value="MalateDH_bact"/>
    <property type="match status" value="1"/>
</dbReference>
<dbReference type="NCBIfam" id="NF004863">
    <property type="entry name" value="PRK06223.1"/>
    <property type="match status" value="1"/>
</dbReference>
<dbReference type="PANTHER" id="PTHR43128">
    <property type="entry name" value="L-2-HYDROXYCARBOXYLATE DEHYDROGENASE (NAD(P)(+))"/>
    <property type="match status" value="1"/>
</dbReference>
<dbReference type="PANTHER" id="PTHR43128:SF16">
    <property type="entry name" value="L-LACTATE DEHYDROGENASE"/>
    <property type="match status" value="1"/>
</dbReference>
<dbReference type="Pfam" id="PF02866">
    <property type="entry name" value="Ldh_1_C"/>
    <property type="match status" value="1"/>
</dbReference>
<dbReference type="Pfam" id="PF00056">
    <property type="entry name" value="Ldh_1_N"/>
    <property type="match status" value="1"/>
</dbReference>
<dbReference type="PIRSF" id="PIRSF000102">
    <property type="entry name" value="Lac_mal_DH"/>
    <property type="match status" value="1"/>
</dbReference>
<dbReference type="PRINTS" id="PR00086">
    <property type="entry name" value="LLDHDRGNASE"/>
</dbReference>
<dbReference type="SUPFAM" id="SSF56327">
    <property type="entry name" value="LDH C-terminal domain-like"/>
    <property type="match status" value="1"/>
</dbReference>
<dbReference type="SUPFAM" id="SSF51735">
    <property type="entry name" value="NAD(P)-binding Rossmann-fold domains"/>
    <property type="match status" value="1"/>
</dbReference>
<organism>
    <name type="scientific">Bacillus thuringiensis subsp. konkukian (strain 97-27)</name>
    <dbReference type="NCBI Taxonomy" id="281309"/>
    <lineage>
        <taxon>Bacteria</taxon>
        <taxon>Bacillati</taxon>
        <taxon>Bacillota</taxon>
        <taxon>Bacilli</taxon>
        <taxon>Bacillales</taxon>
        <taxon>Bacillaceae</taxon>
        <taxon>Bacillus</taxon>
        <taxon>Bacillus cereus group</taxon>
    </lineage>
</organism>
<feature type="chain" id="PRO_0000113430" description="Malate dehydrogenase">
    <location>
        <begin position="1"/>
        <end position="312"/>
    </location>
</feature>
<feature type="active site" description="Proton acceptor" evidence="1">
    <location>
        <position position="180"/>
    </location>
</feature>
<feature type="binding site" evidence="1">
    <location>
        <begin position="12"/>
        <end position="17"/>
    </location>
    <ligand>
        <name>NAD(+)</name>
        <dbReference type="ChEBI" id="CHEBI:57540"/>
    </ligand>
</feature>
<feature type="binding site" evidence="1">
    <location>
        <position position="36"/>
    </location>
    <ligand>
        <name>NAD(+)</name>
        <dbReference type="ChEBI" id="CHEBI:57540"/>
    </ligand>
</feature>
<feature type="binding site" evidence="1">
    <location>
        <position position="87"/>
    </location>
    <ligand>
        <name>substrate</name>
    </ligand>
</feature>
<feature type="binding site" evidence="1">
    <location>
        <position position="93"/>
    </location>
    <ligand>
        <name>substrate</name>
    </ligand>
</feature>
<feature type="binding site" evidence="1">
    <location>
        <position position="100"/>
    </location>
    <ligand>
        <name>NAD(+)</name>
        <dbReference type="ChEBI" id="CHEBI:57540"/>
    </ligand>
</feature>
<feature type="binding site" evidence="1">
    <location>
        <begin position="123"/>
        <end position="125"/>
    </location>
    <ligand>
        <name>NAD(+)</name>
        <dbReference type="ChEBI" id="CHEBI:57540"/>
    </ligand>
</feature>
<feature type="binding site" evidence="1">
    <location>
        <position position="125"/>
    </location>
    <ligand>
        <name>substrate</name>
    </ligand>
</feature>
<feature type="binding site" evidence="1">
    <location>
        <position position="156"/>
    </location>
    <ligand>
        <name>substrate</name>
    </ligand>
</feature>
<feature type="modified residue" description="Phosphoserine" evidence="1">
    <location>
        <position position="149"/>
    </location>
</feature>
<protein>
    <recommendedName>
        <fullName evidence="1">Malate dehydrogenase</fullName>
        <ecNumber evidence="1">1.1.1.37</ecNumber>
    </recommendedName>
</protein>
<keyword id="KW-0520">NAD</keyword>
<keyword id="KW-0560">Oxidoreductase</keyword>
<keyword id="KW-0597">Phosphoprotein</keyword>
<keyword id="KW-0816">Tricarboxylic acid cycle</keyword>
<name>MDH_BACHK</name>
<reference key="1">
    <citation type="journal article" date="2006" name="J. Bacteriol.">
        <title>Pathogenomic sequence analysis of Bacillus cereus and Bacillus thuringiensis isolates closely related to Bacillus anthracis.</title>
        <authorList>
            <person name="Han C.S."/>
            <person name="Xie G."/>
            <person name="Challacombe J.F."/>
            <person name="Altherr M.R."/>
            <person name="Bhotika S.S."/>
            <person name="Bruce D."/>
            <person name="Campbell C.S."/>
            <person name="Campbell M.L."/>
            <person name="Chen J."/>
            <person name="Chertkov O."/>
            <person name="Cleland C."/>
            <person name="Dimitrijevic M."/>
            <person name="Doggett N.A."/>
            <person name="Fawcett J.J."/>
            <person name="Glavina T."/>
            <person name="Goodwin L.A."/>
            <person name="Hill K.K."/>
            <person name="Hitchcock P."/>
            <person name="Jackson P.J."/>
            <person name="Keim P."/>
            <person name="Kewalramani A.R."/>
            <person name="Longmire J."/>
            <person name="Lucas S."/>
            <person name="Malfatti S."/>
            <person name="McMurry K."/>
            <person name="Meincke L.J."/>
            <person name="Misra M."/>
            <person name="Moseman B.L."/>
            <person name="Mundt M."/>
            <person name="Munk A.C."/>
            <person name="Okinaka R.T."/>
            <person name="Parson-Quintana B."/>
            <person name="Reilly L.P."/>
            <person name="Richardson P."/>
            <person name="Robinson D.L."/>
            <person name="Rubin E."/>
            <person name="Saunders E."/>
            <person name="Tapia R."/>
            <person name="Tesmer J.G."/>
            <person name="Thayer N."/>
            <person name="Thompson L.S."/>
            <person name="Tice H."/>
            <person name="Ticknor L.O."/>
            <person name="Wills P.L."/>
            <person name="Brettin T.S."/>
            <person name="Gilna P."/>
        </authorList>
    </citation>
    <scope>NUCLEOTIDE SEQUENCE [LARGE SCALE GENOMIC DNA]</scope>
    <source>
        <strain>97-27</strain>
    </source>
</reference>
<gene>
    <name evidence="1" type="primary">mdh</name>
    <name type="ordered locus">BT9727_4321</name>
</gene>
<comment type="function">
    <text evidence="1">Catalyzes the reversible oxidation of malate to oxaloacetate.</text>
</comment>
<comment type="catalytic activity">
    <reaction evidence="1">
        <text>(S)-malate + NAD(+) = oxaloacetate + NADH + H(+)</text>
        <dbReference type="Rhea" id="RHEA:21432"/>
        <dbReference type="ChEBI" id="CHEBI:15378"/>
        <dbReference type="ChEBI" id="CHEBI:15589"/>
        <dbReference type="ChEBI" id="CHEBI:16452"/>
        <dbReference type="ChEBI" id="CHEBI:57540"/>
        <dbReference type="ChEBI" id="CHEBI:57945"/>
        <dbReference type="EC" id="1.1.1.37"/>
    </reaction>
</comment>
<comment type="similarity">
    <text evidence="1">Belongs to the LDH/MDH superfamily. MDH type 3 family.</text>
</comment>
<accession>Q6HCU0</accession>
<sequence length="312" mass="33498">MTIKRKKVSVIGAGFTGATTAFLLAQKELADVVLVDIPQLENPTKGKALDMLEASPVQGFDANIIGTSDYADTADSDVVVITAGIARKPGMSRDDLVATNSKIMKSITRDIAKHSPNAIIVVLTNPVDAMTYSVFKEAGFPKERVIGQSGVLDTARFRTFIAQELNLSVKDITGFVLGGHGDDMVPLVRYSYAGGIPLETLIPKERLEAIVERTRKGGGEIVGLLGNGSAYYAPAASLVEMTEAILKDQRRVLPAIAYLEGEYGYSDLYLGVPVILGGNGIEKIIELELLADEKEALDRSVESVRNVMKVLV</sequence>
<evidence type="ECO:0000255" key="1">
    <source>
        <dbReference type="HAMAP-Rule" id="MF_00487"/>
    </source>
</evidence>